<organism>
    <name type="scientific">Emericella nidulans (strain FGSC A4 / ATCC 38163 / CBS 112.46 / NRRL 194 / M139)</name>
    <name type="common">Aspergillus nidulans</name>
    <dbReference type="NCBI Taxonomy" id="227321"/>
    <lineage>
        <taxon>Eukaryota</taxon>
        <taxon>Fungi</taxon>
        <taxon>Dikarya</taxon>
        <taxon>Ascomycota</taxon>
        <taxon>Pezizomycotina</taxon>
        <taxon>Eurotiomycetes</taxon>
        <taxon>Eurotiomycetidae</taxon>
        <taxon>Eurotiales</taxon>
        <taxon>Aspergillaceae</taxon>
        <taxon>Aspergillus</taxon>
        <taxon>Aspergillus subgen. Nidulantes</taxon>
    </lineage>
</organism>
<name>S2538_EMENI</name>
<protein>
    <recommendedName>
        <fullName evidence="2">Mitochondrial glycine transporter</fullName>
    </recommendedName>
    <alternativeName>
        <fullName evidence="2">Solute carrier family 25 member 38 homolog</fullName>
    </alternativeName>
</protein>
<sequence length="326" mass="34869">MSNNASPQAAYVPAVKPVSKSSKTTFHFGAGLLSGLTSSILLQPADLLKTRVQQSAHPSSVFSTVKAILSSPNPVRNLWRGTLPSALRTGFGSALYFTSLNALRTSLASTSLTNYDADVKKIGNGSSALPKLSHSANLATGAAARVAAGFVMMPVTVLKVRYESDYYAYRSLYSAGRDIVRTEGVRGLFSGFGATAARDAPYAGLYVLFYEQLKRYLSATTSSTELPSSSSINFVSGGLAAGLATAITNPFDAVKTRLQLMPGKYGNMIRAVRLMVREDGVRSLFGGLGLRIGRKALSSALAWTVYEELILRAEMKWARDEAEARL</sequence>
<feature type="chain" id="PRO_0000425266" description="Mitochondrial glycine transporter">
    <location>
        <begin position="1"/>
        <end position="326"/>
    </location>
</feature>
<feature type="transmembrane region" description="Helical; Name=1" evidence="2">
    <location>
        <begin position="28"/>
        <end position="53"/>
    </location>
</feature>
<feature type="transmembrane region" description="Helical; Name=2" evidence="2">
    <location>
        <begin position="81"/>
        <end position="107"/>
    </location>
</feature>
<feature type="transmembrane region" description="Helical; Name=3" evidence="2">
    <location>
        <begin position="138"/>
        <end position="163"/>
    </location>
</feature>
<feature type="transmembrane region" description="Helical; Name=4" evidence="2">
    <location>
        <begin position="191"/>
        <end position="214"/>
    </location>
</feature>
<feature type="transmembrane region" description="Helical; Name=5" evidence="2">
    <location>
        <begin position="232"/>
        <end position="258"/>
    </location>
</feature>
<feature type="transmembrane region" description="Helical; Name=6" evidence="2">
    <location>
        <begin position="287"/>
        <end position="305"/>
    </location>
</feature>
<feature type="repeat" description="Solcar 1" evidence="2">
    <location>
        <begin position="22"/>
        <end position="106"/>
    </location>
</feature>
<feature type="repeat" description="Solcar 2" evidence="2">
    <location>
        <begin position="135"/>
        <end position="216"/>
    </location>
</feature>
<feature type="repeat" description="Solcar 3" evidence="2">
    <location>
        <begin position="228"/>
        <end position="312"/>
    </location>
</feature>
<accession>Q5B717</accession>
<accession>C8V3U5</accession>
<evidence type="ECO:0000250" key="1">
    <source>
        <dbReference type="UniProtKB" id="Q96DW6"/>
    </source>
</evidence>
<evidence type="ECO:0000255" key="2">
    <source>
        <dbReference type="HAMAP-Rule" id="MF_03064"/>
    </source>
</evidence>
<evidence type="ECO:0000305" key="3"/>
<comment type="function">
    <text evidence="2">Mitochondrial glycine transporter that imports glycine into the mitochondrial matrix. Plays an important role in providing glycine for the first enzymatic step in heme biosynthesis, the condensation of glycine with succinyl-CoA to produce 5-aminolevulinate (ALA) in the mitochondrial matrix.</text>
</comment>
<comment type="catalytic activity">
    <reaction evidence="1">
        <text>glycine(in) = glycine(out)</text>
        <dbReference type="Rhea" id="RHEA:70715"/>
        <dbReference type="ChEBI" id="CHEBI:57305"/>
    </reaction>
</comment>
<comment type="subcellular location">
    <subcellularLocation>
        <location evidence="2">Mitochondrion inner membrane</location>
        <topology evidence="2">Multi-pass membrane protein</topology>
    </subcellularLocation>
</comment>
<comment type="similarity">
    <text evidence="2">Belongs to the mitochondrial carrier (TC 2.A.29) family. SLC25A38 subfamily.</text>
</comment>
<comment type="sequence caution" evidence="3">
    <conflict type="erroneous gene model prediction">
        <sequence resource="EMBL-CDS" id="CBF75661"/>
    </conflict>
</comment>
<comment type="sequence caution" evidence="3">
    <conflict type="erroneous gene model prediction">
        <sequence resource="EMBL-CDS" id="EAA59871"/>
    </conflict>
</comment>
<keyword id="KW-0472">Membrane</keyword>
<keyword id="KW-0496">Mitochondrion</keyword>
<keyword id="KW-0999">Mitochondrion inner membrane</keyword>
<keyword id="KW-1185">Reference proteome</keyword>
<keyword id="KW-0677">Repeat</keyword>
<keyword id="KW-0812">Transmembrane</keyword>
<keyword id="KW-1133">Transmembrane helix</keyword>
<keyword id="KW-0813">Transport</keyword>
<proteinExistence type="inferred from homology"/>
<reference key="1">
    <citation type="journal article" date="2005" name="Nature">
        <title>Sequencing of Aspergillus nidulans and comparative analysis with A. fumigatus and A. oryzae.</title>
        <authorList>
            <person name="Galagan J.E."/>
            <person name="Calvo S.E."/>
            <person name="Cuomo C."/>
            <person name="Ma L.-J."/>
            <person name="Wortman J.R."/>
            <person name="Batzoglou S."/>
            <person name="Lee S.-I."/>
            <person name="Bastuerkmen M."/>
            <person name="Spevak C.C."/>
            <person name="Clutterbuck J."/>
            <person name="Kapitonov V."/>
            <person name="Jurka J."/>
            <person name="Scazzocchio C."/>
            <person name="Farman M.L."/>
            <person name="Butler J."/>
            <person name="Purcell S."/>
            <person name="Harris S."/>
            <person name="Braus G.H."/>
            <person name="Draht O."/>
            <person name="Busch S."/>
            <person name="D'Enfert C."/>
            <person name="Bouchier C."/>
            <person name="Goldman G.H."/>
            <person name="Bell-Pedersen D."/>
            <person name="Griffiths-Jones S."/>
            <person name="Doonan J.H."/>
            <person name="Yu J."/>
            <person name="Vienken K."/>
            <person name="Pain A."/>
            <person name="Freitag M."/>
            <person name="Selker E.U."/>
            <person name="Archer D.B."/>
            <person name="Penalva M.A."/>
            <person name="Oakley B.R."/>
            <person name="Momany M."/>
            <person name="Tanaka T."/>
            <person name="Kumagai T."/>
            <person name="Asai K."/>
            <person name="Machida M."/>
            <person name="Nierman W.C."/>
            <person name="Denning D.W."/>
            <person name="Caddick M.X."/>
            <person name="Hynes M."/>
            <person name="Paoletti M."/>
            <person name="Fischer R."/>
            <person name="Miller B.L."/>
            <person name="Dyer P.S."/>
            <person name="Sachs M.S."/>
            <person name="Osmani S.A."/>
            <person name="Birren B.W."/>
        </authorList>
    </citation>
    <scope>NUCLEOTIDE SEQUENCE [LARGE SCALE GENOMIC DNA]</scope>
    <source>
        <strain>FGSC A4 / ATCC 38163 / CBS 112.46 / NRRL 194 / M139</strain>
    </source>
</reference>
<reference key="2">
    <citation type="journal article" date="2009" name="Fungal Genet. Biol.">
        <title>The 2008 update of the Aspergillus nidulans genome annotation: a community effort.</title>
        <authorList>
            <person name="Wortman J.R."/>
            <person name="Gilsenan J.M."/>
            <person name="Joardar V."/>
            <person name="Deegan J."/>
            <person name="Clutterbuck J."/>
            <person name="Andersen M.R."/>
            <person name="Archer D."/>
            <person name="Bencina M."/>
            <person name="Braus G."/>
            <person name="Coutinho P."/>
            <person name="von Dohren H."/>
            <person name="Doonan J."/>
            <person name="Driessen A.J."/>
            <person name="Durek P."/>
            <person name="Espeso E."/>
            <person name="Fekete E."/>
            <person name="Flipphi M."/>
            <person name="Estrada C.G."/>
            <person name="Geysens S."/>
            <person name="Goldman G."/>
            <person name="de Groot P.W."/>
            <person name="Hansen K."/>
            <person name="Harris S.D."/>
            <person name="Heinekamp T."/>
            <person name="Helmstaedt K."/>
            <person name="Henrissat B."/>
            <person name="Hofmann G."/>
            <person name="Homan T."/>
            <person name="Horio T."/>
            <person name="Horiuchi H."/>
            <person name="James S."/>
            <person name="Jones M."/>
            <person name="Karaffa L."/>
            <person name="Karanyi Z."/>
            <person name="Kato M."/>
            <person name="Keller N."/>
            <person name="Kelly D.E."/>
            <person name="Kiel J.A."/>
            <person name="Kim J.M."/>
            <person name="van der Klei I.J."/>
            <person name="Klis F.M."/>
            <person name="Kovalchuk A."/>
            <person name="Krasevec N."/>
            <person name="Kubicek C.P."/>
            <person name="Liu B."/>
            <person name="Maccabe A."/>
            <person name="Meyer V."/>
            <person name="Mirabito P."/>
            <person name="Miskei M."/>
            <person name="Mos M."/>
            <person name="Mullins J."/>
            <person name="Nelson D.R."/>
            <person name="Nielsen J."/>
            <person name="Oakley B.R."/>
            <person name="Osmani S.A."/>
            <person name="Pakula T."/>
            <person name="Paszewski A."/>
            <person name="Paulsen I."/>
            <person name="Pilsyk S."/>
            <person name="Pocsi I."/>
            <person name="Punt P.J."/>
            <person name="Ram A.F."/>
            <person name="Ren Q."/>
            <person name="Robellet X."/>
            <person name="Robson G."/>
            <person name="Seiboth B."/>
            <person name="van Solingen P."/>
            <person name="Specht T."/>
            <person name="Sun J."/>
            <person name="Taheri-Talesh N."/>
            <person name="Takeshita N."/>
            <person name="Ussery D."/>
            <person name="vanKuyk P.A."/>
            <person name="Visser H."/>
            <person name="van de Vondervoort P.J."/>
            <person name="de Vries R.P."/>
            <person name="Walton J."/>
            <person name="Xiang X."/>
            <person name="Xiong Y."/>
            <person name="Zeng A.P."/>
            <person name="Brandt B.W."/>
            <person name="Cornell M.J."/>
            <person name="van den Hondel C.A."/>
            <person name="Visser J."/>
            <person name="Oliver S.G."/>
            <person name="Turner G."/>
        </authorList>
    </citation>
    <scope>GENOME REANNOTATION</scope>
    <source>
        <strain>FGSC A4 / ATCC 38163 / CBS 112.46 / NRRL 194 / M139</strain>
    </source>
</reference>
<gene>
    <name type="ORF">AN3663</name>
</gene>
<dbReference type="EMBL" id="AACD01000061">
    <property type="protein sequence ID" value="EAA59871.1"/>
    <property type="status" value="ALT_SEQ"/>
    <property type="molecule type" value="Genomic_DNA"/>
</dbReference>
<dbReference type="EMBL" id="BN001302">
    <property type="protein sequence ID" value="CBF75661.1"/>
    <property type="status" value="ALT_SEQ"/>
    <property type="molecule type" value="Genomic_DNA"/>
</dbReference>
<dbReference type="RefSeq" id="XP_661267.1">
    <property type="nucleotide sequence ID" value="XM_656175.1"/>
</dbReference>
<dbReference type="SMR" id="Q5B717"/>
<dbReference type="FunCoup" id="Q5B717">
    <property type="interactions" value="100"/>
</dbReference>
<dbReference type="STRING" id="227321.Q5B717"/>
<dbReference type="KEGG" id="ani:ANIA_03663"/>
<dbReference type="VEuPathDB" id="FungiDB:AN3663"/>
<dbReference type="eggNOG" id="KOG0766">
    <property type="taxonomic scope" value="Eukaryota"/>
</dbReference>
<dbReference type="HOGENOM" id="CLU_015166_0_3_1"/>
<dbReference type="InParanoid" id="Q5B717"/>
<dbReference type="OrthoDB" id="1924968at2759"/>
<dbReference type="Proteomes" id="UP000000560">
    <property type="component" value="Chromosome II"/>
</dbReference>
<dbReference type="GO" id="GO:0005743">
    <property type="term" value="C:mitochondrial inner membrane"/>
    <property type="evidence" value="ECO:0007669"/>
    <property type="project" value="UniProtKB-SubCell"/>
</dbReference>
<dbReference type="GO" id="GO:0005739">
    <property type="term" value="C:mitochondrion"/>
    <property type="evidence" value="ECO:0000318"/>
    <property type="project" value="GO_Central"/>
</dbReference>
<dbReference type="GO" id="GO:0015187">
    <property type="term" value="F:glycine transmembrane transporter activity"/>
    <property type="evidence" value="ECO:0000318"/>
    <property type="project" value="GO_Central"/>
</dbReference>
<dbReference type="GO" id="GO:1904983">
    <property type="term" value="P:glycine import into mitochondrion"/>
    <property type="evidence" value="ECO:0000318"/>
    <property type="project" value="GO_Central"/>
</dbReference>
<dbReference type="FunFam" id="1.50.40.10:FF:000103">
    <property type="entry name" value="Mitochondrial glycine transporter"/>
    <property type="match status" value="1"/>
</dbReference>
<dbReference type="Gene3D" id="1.50.40.10">
    <property type="entry name" value="Mitochondrial carrier domain"/>
    <property type="match status" value="1"/>
</dbReference>
<dbReference type="HAMAP" id="MF_03064">
    <property type="entry name" value="SLC25A38"/>
    <property type="match status" value="1"/>
</dbReference>
<dbReference type="InterPro" id="IPR030847">
    <property type="entry name" value="Hem25/SLC25A38"/>
</dbReference>
<dbReference type="InterPro" id="IPR018108">
    <property type="entry name" value="Mitochondrial_sb/sol_carrier"/>
</dbReference>
<dbReference type="InterPro" id="IPR023395">
    <property type="entry name" value="Mt_carrier_dom_sf"/>
</dbReference>
<dbReference type="PANTHER" id="PTHR46181">
    <property type="entry name" value="MITOCHONDRIAL GLYCINE TRANSPORTER"/>
    <property type="match status" value="1"/>
</dbReference>
<dbReference type="PANTHER" id="PTHR46181:SF3">
    <property type="entry name" value="MITOCHONDRIAL GLYCINE TRANSPORTER"/>
    <property type="match status" value="1"/>
</dbReference>
<dbReference type="Pfam" id="PF00153">
    <property type="entry name" value="Mito_carr"/>
    <property type="match status" value="3"/>
</dbReference>
<dbReference type="SUPFAM" id="SSF103506">
    <property type="entry name" value="Mitochondrial carrier"/>
    <property type="match status" value="1"/>
</dbReference>
<dbReference type="PROSITE" id="PS50920">
    <property type="entry name" value="SOLCAR"/>
    <property type="match status" value="3"/>
</dbReference>